<protein>
    <recommendedName>
        <fullName evidence="1">Co-chaperone protein HscB homolog</fullName>
    </recommendedName>
</protein>
<comment type="function">
    <text evidence="1">Co-chaperone involved in the maturation of iron-sulfur cluster-containing proteins. Seems to help targeting proteins to be folded toward HscA.</text>
</comment>
<comment type="subunit">
    <text evidence="1">Interacts with HscA and stimulates its ATPase activity.</text>
</comment>
<comment type="similarity">
    <text evidence="1">Belongs to the HscB family.</text>
</comment>
<organism>
    <name type="scientific">Pseudomonas entomophila (strain L48)</name>
    <dbReference type="NCBI Taxonomy" id="384676"/>
    <lineage>
        <taxon>Bacteria</taxon>
        <taxon>Pseudomonadati</taxon>
        <taxon>Pseudomonadota</taxon>
        <taxon>Gammaproteobacteria</taxon>
        <taxon>Pseudomonadales</taxon>
        <taxon>Pseudomonadaceae</taxon>
        <taxon>Pseudomonas</taxon>
    </lineage>
</organism>
<name>HSCB_PSEE4</name>
<sequence length="173" mass="20257">MGTPCHYALFDLQPAFRLDLDKLAVRYRELAREVHPDRFADASEREQRVALEKSAALNDAYQTLRSAPRRARYLLAIGGHEVPQEVTVHDPDFLLQQMQWREELEELQDEADLDGVGVFKKRLKVAQDTLNDDFADCWDDAAQRDKAERLMRRMQFLDKLAQEVRQLEERLDD</sequence>
<accession>Q1IEI9</accession>
<gene>
    <name evidence="1" type="primary">hscB</name>
    <name type="ordered locus">PSEEN1013</name>
</gene>
<dbReference type="EMBL" id="CT573326">
    <property type="protein sequence ID" value="CAK13916.1"/>
    <property type="molecule type" value="Genomic_DNA"/>
</dbReference>
<dbReference type="RefSeq" id="WP_011532339.1">
    <property type="nucleotide sequence ID" value="NC_008027.1"/>
</dbReference>
<dbReference type="SMR" id="Q1IEI9"/>
<dbReference type="STRING" id="384676.PSEEN1013"/>
<dbReference type="GeneID" id="32804308"/>
<dbReference type="KEGG" id="pen:PSEEN1013"/>
<dbReference type="eggNOG" id="COG1076">
    <property type="taxonomic scope" value="Bacteria"/>
</dbReference>
<dbReference type="HOGENOM" id="CLU_068529_2_0_6"/>
<dbReference type="OrthoDB" id="287587at2"/>
<dbReference type="Proteomes" id="UP000000658">
    <property type="component" value="Chromosome"/>
</dbReference>
<dbReference type="GO" id="GO:1990230">
    <property type="term" value="C:iron-sulfur cluster transfer complex"/>
    <property type="evidence" value="ECO:0007669"/>
    <property type="project" value="TreeGrafter"/>
</dbReference>
<dbReference type="GO" id="GO:0001671">
    <property type="term" value="F:ATPase activator activity"/>
    <property type="evidence" value="ECO:0007669"/>
    <property type="project" value="InterPro"/>
</dbReference>
<dbReference type="GO" id="GO:0051087">
    <property type="term" value="F:protein-folding chaperone binding"/>
    <property type="evidence" value="ECO:0007669"/>
    <property type="project" value="InterPro"/>
</dbReference>
<dbReference type="GO" id="GO:0044571">
    <property type="term" value="P:[2Fe-2S] cluster assembly"/>
    <property type="evidence" value="ECO:0007669"/>
    <property type="project" value="InterPro"/>
</dbReference>
<dbReference type="GO" id="GO:0051259">
    <property type="term" value="P:protein complex oligomerization"/>
    <property type="evidence" value="ECO:0007669"/>
    <property type="project" value="InterPro"/>
</dbReference>
<dbReference type="GO" id="GO:0006457">
    <property type="term" value="P:protein folding"/>
    <property type="evidence" value="ECO:0007669"/>
    <property type="project" value="UniProtKB-UniRule"/>
</dbReference>
<dbReference type="CDD" id="cd06257">
    <property type="entry name" value="DnaJ"/>
    <property type="match status" value="1"/>
</dbReference>
<dbReference type="Gene3D" id="1.10.287.110">
    <property type="entry name" value="DnaJ domain"/>
    <property type="match status" value="1"/>
</dbReference>
<dbReference type="Gene3D" id="1.20.1280.20">
    <property type="entry name" value="HscB, C-terminal domain"/>
    <property type="match status" value="1"/>
</dbReference>
<dbReference type="HAMAP" id="MF_00682">
    <property type="entry name" value="HscB"/>
    <property type="match status" value="1"/>
</dbReference>
<dbReference type="InterPro" id="IPR001623">
    <property type="entry name" value="DnaJ_domain"/>
</dbReference>
<dbReference type="InterPro" id="IPR004640">
    <property type="entry name" value="HscB"/>
</dbReference>
<dbReference type="InterPro" id="IPR036386">
    <property type="entry name" value="HscB_C_sf"/>
</dbReference>
<dbReference type="InterPro" id="IPR009073">
    <property type="entry name" value="HscB_oligo_C"/>
</dbReference>
<dbReference type="InterPro" id="IPR036869">
    <property type="entry name" value="J_dom_sf"/>
</dbReference>
<dbReference type="NCBIfam" id="TIGR00714">
    <property type="entry name" value="hscB"/>
    <property type="match status" value="1"/>
</dbReference>
<dbReference type="NCBIfam" id="NF001420">
    <property type="entry name" value="PRK00294.1"/>
    <property type="match status" value="1"/>
</dbReference>
<dbReference type="PANTHER" id="PTHR14021">
    <property type="entry name" value="IRON-SULFUR CLUSTER CO-CHAPERONE PROTEIN HSCB"/>
    <property type="match status" value="1"/>
</dbReference>
<dbReference type="PANTHER" id="PTHR14021:SF15">
    <property type="entry name" value="IRON-SULFUR CLUSTER CO-CHAPERONE PROTEIN HSCB"/>
    <property type="match status" value="1"/>
</dbReference>
<dbReference type="Pfam" id="PF00226">
    <property type="entry name" value="DnaJ"/>
    <property type="match status" value="1"/>
</dbReference>
<dbReference type="Pfam" id="PF07743">
    <property type="entry name" value="HSCB_C"/>
    <property type="match status" value="1"/>
</dbReference>
<dbReference type="SMART" id="SM00271">
    <property type="entry name" value="DnaJ"/>
    <property type="match status" value="1"/>
</dbReference>
<dbReference type="SUPFAM" id="SSF46565">
    <property type="entry name" value="Chaperone J-domain"/>
    <property type="match status" value="1"/>
</dbReference>
<dbReference type="SUPFAM" id="SSF47144">
    <property type="entry name" value="HSC20 (HSCB), C-terminal oligomerisation domain"/>
    <property type="match status" value="1"/>
</dbReference>
<dbReference type="PROSITE" id="PS50076">
    <property type="entry name" value="DNAJ_2"/>
    <property type="match status" value="1"/>
</dbReference>
<proteinExistence type="inferred from homology"/>
<evidence type="ECO:0000255" key="1">
    <source>
        <dbReference type="HAMAP-Rule" id="MF_00682"/>
    </source>
</evidence>
<feature type="chain" id="PRO_1000083019" description="Co-chaperone protein HscB homolog">
    <location>
        <begin position="1"/>
        <end position="173"/>
    </location>
</feature>
<feature type="domain" description="J" evidence="1">
    <location>
        <begin position="5"/>
        <end position="77"/>
    </location>
</feature>
<keyword id="KW-0143">Chaperone</keyword>
<reference key="1">
    <citation type="journal article" date="2006" name="Nat. Biotechnol.">
        <title>Complete genome sequence of the entomopathogenic and metabolically versatile soil bacterium Pseudomonas entomophila.</title>
        <authorList>
            <person name="Vodovar N."/>
            <person name="Vallenet D."/>
            <person name="Cruveiller S."/>
            <person name="Rouy Z."/>
            <person name="Barbe V."/>
            <person name="Acosta C."/>
            <person name="Cattolico L."/>
            <person name="Jubin C."/>
            <person name="Lajus A."/>
            <person name="Segurens B."/>
            <person name="Vacherie B."/>
            <person name="Wincker P."/>
            <person name="Weissenbach J."/>
            <person name="Lemaitre B."/>
            <person name="Medigue C."/>
            <person name="Boccard F."/>
        </authorList>
    </citation>
    <scope>NUCLEOTIDE SEQUENCE [LARGE SCALE GENOMIC DNA]</scope>
    <source>
        <strain>L48</strain>
    </source>
</reference>